<reference evidence="7" key="1">
    <citation type="journal article" date="2020" name="PLoS Genet.">
        <title>Dramatically diverse Schizosaccharomyces pombe wtf meiotic drivers all display high gamete-killing efficiency.</title>
        <authorList>
            <person name="Bravo Nunez M.A."/>
            <person name="Sabbarini I.M."/>
            <person name="Eickbush M.T."/>
            <person name="Liang Y."/>
            <person name="Lange J.J."/>
            <person name="Kent A.M."/>
            <person name="Zanders S.E."/>
        </authorList>
    </citation>
    <scope>NUCLEOTIDE SEQUENCE [GENOMIC DNA]</scope>
    <scope>SUBCELLULAR LOCATION</scope>
</reference>
<sequence>MLKMSGSYAPVEDSADELSVHSGNDNEIDLEKGLLPKCNTGNGGTTPCSEPPHYDSDAVVEMDMYENNIYMQTFKLRPFPKSGVTNFSNVVFQMKTYENNRHMQTFRLRPFAKNGVTNGVKLAQVLFLLLPFNFIFIACLFFRKASFTDFSLMGWILFGIWCLTCFLSSFILYAYHESWTKFARERPDDFAGILILLLFPGIVTMIVFYGIYMNSIYG</sequence>
<gene>
    <name evidence="7" type="primary">wtf7</name>
</gene>
<accession>A0A482APM8</accession>
<organism evidence="7">
    <name type="scientific">Schizosaccharomyces kambucha</name>
    <name type="common">Fission yeast</name>
    <dbReference type="NCBI Taxonomy" id="204045"/>
    <lineage>
        <taxon>Eukaryota</taxon>
        <taxon>Fungi</taxon>
        <taxon>Dikarya</taxon>
        <taxon>Ascomycota</taxon>
        <taxon>Taphrinomycotina</taxon>
        <taxon>Schizosaccharomycetes</taxon>
        <taxon>Schizosaccharomycetales</taxon>
        <taxon>Schizosaccharomycetaceae</taxon>
        <taxon>Schizosaccharomyces</taxon>
    </lineage>
</organism>
<proteinExistence type="inferred from homology"/>
<comment type="function">
    <text evidence="1">May act in meiotic drive.</text>
</comment>
<comment type="subcellular location">
    <subcellularLocation>
        <location evidence="2 4">Spore membrane</location>
        <topology evidence="2">Multi-pass membrane protein</topology>
    </subcellularLocation>
</comment>
<comment type="similarity">
    <text evidence="6">Belongs to the WTF family.</text>
</comment>
<name>WTF7_SCHKA</name>
<evidence type="ECO:0000250" key="1">
    <source>
        <dbReference type="UniProtKB" id="A0A218N034"/>
    </source>
</evidence>
<evidence type="ECO:0000255" key="2"/>
<evidence type="ECO:0000256" key="3">
    <source>
        <dbReference type="SAM" id="MobiDB-lite"/>
    </source>
</evidence>
<evidence type="ECO:0000269" key="4">
    <source>
    </source>
</evidence>
<evidence type="ECO:0000303" key="5">
    <source>
    </source>
</evidence>
<evidence type="ECO:0000305" key="6"/>
<evidence type="ECO:0000312" key="7">
    <source>
        <dbReference type="EMBL" id="QBL54498.1"/>
    </source>
</evidence>
<protein>
    <recommendedName>
        <fullName evidence="5">Wtf element wtf7</fullName>
    </recommendedName>
</protein>
<dbReference type="EMBL" id="MH837433">
    <property type="protein sequence ID" value="QBL54498.1"/>
    <property type="molecule type" value="Genomic_DNA"/>
</dbReference>
<dbReference type="SMR" id="A0A482APM8"/>
<dbReference type="GO" id="GO:0005737">
    <property type="term" value="C:cytoplasm"/>
    <property type="evidence" value="ECO:0000314"/>
    <property type="project" value="UniProtKB"/>
</dbReference>
<dbReference type="GO" id="GO:0016020">
    <property type="term" value="C:membrane"/>
    <property type="evidence" value="ECO:0007669"/>
    <property type="project" value="UniProtKB-KW"/>
</dbReference>
<dbReference type="GO" id="GO:0110134">
    <property type="term" value="P:meiotic drive"/>
    <property type="evidence" value="ECO:0007669"/>
    <property type="project" value="InterPro"/>
</dbReference>
<dbReference type="InterPro" id="IPR004982">
    <property type="entry name" value="WTF"/>
</dbReference>
<dbReference type="Pfam" id="PF03303">
    <property type="entry name" value="WTF"/>
    <property type="match status" value="1"/>
</dbReference>
<feature type="chain" id="PRO_0000452257" description="Wtf element wtf7">
    <location>
        <begin position="1"/>
        <end position="218"/>
    </location>
</feature>
<feature type="transmembrane region" description="Helical" evidence="2">
    <location>
        <begin position="122"/>
        <end position="142"/>
    </location>
</feature>
<feature type="transmembrane region" description="Helical" evidence="2">
    <location>
        <begin position="152"/>
        <end position="172"/>
    </location>
</feature>
<feature type="transmembrane region" description="Helical" evidence="2">
    <location>
        <begin position="191"/>
        <end position="211"/>
    </location>
</feature>
<feature type="region of interest" description="Disordered" evidence="3">
    <location>
        <begin position="1"/>
        <end position="23"/>
    </location>
</feature>
<keyword id="KW-0472">Membrane</keyword>
<keyword id="KW-0812">Transmembrane</keyword>
<keyword id="KW-1133">Transmembrane helix</keyword>